<organism>
    <name type="scientific">Ornithodoros savignyi</name>
    <name type="common">African eyed tampan</name>
    <name type="synonym">Soft tick</name>
    <dbReference type="NCBI Taxonomy" id="69826"/>
    <lineage>
        <taxon>Eukaryota</taxon>
        <taxon>Metazoa</taxon>
        <taxon>Ecdysozoa</taxon>
        <taxon>Arthropoda</taxon>
        <taxon>Chelicerata</taxon>
        <taxon>Arachnida</taxon>
        <taxon>Acari</taxon>
        <taxon>Parasitiformes</taxon>
        <taxon>Ixodida</taxon>
        <taxon>Ixodoidea</taxon>
        <taxon>Argasidae</taxon>
        <taxon>Ornithodorinae</taxon>
        <taxon>Ornithodoros</taxon>
    </lineage>
</organism>
<sequence length="86" mass="9624">DSEFPCPRKQQPAGNSECSYYCEMNGQWKLGKFQNGARCDYNAVKDGVCNEGLCYASGDSASNTQNQGGSRRQENEDQGDDEWDRK</sequence>
<accession>C0HMC3</accession>
<keyword id="KW-0002">3D-structure</keyword>
<keyword id="KW-1203">Blood coagulation cascade inhibiting toxin</keyword>
<keyword id="KW-1216">Complement system impairing toxin</keyword>
<keyword id="KW-1015">Disulfide bond</keyword>
<keyword id="KW-1199">Hemostasis impairing toxin</keyword>
<keyword id="KW-0964">Secreted</keyword>
<keyword id="KW-0800">Toxin</keyword>
<evidence type="ECO:0000256" key="1">
    <source>
        <dbReference type="SAM" id="MobiDB-lite"/>
    </source>
</evidence>
<evidence type="ECO:0000269" key="2">
    <source>
    </source>
</evidence>
<evidence type="ECO:0000269" key="3">
    <source>
    </source>
</evidence>
<evidence type="ECO:0000303" key="4">
    <source>
    </source>
</evidence>
<evidence type="ECO:0000303" key="5">
    <source>
    </source>
</evidence>
<evidence type="ECO:0000305" key="6"/>
<evidence type="ECO:0000312" key="7">
    <source>
        <dbReference type="PDB" id="7NE8"/>
    </source>
</evidence>
<feature type="chain" id="PRO_0000460841" description="BaSO(4)-adsorbing protein 1">
    <location>
        <begin position="1"/>
        <end position="86"/>
    </location>
</feature>
<feature type="region of interest" description="Disordered" evidence="1">
    <location>
        <begin position="58"/>
        <end position="86"/>
    </location>
</feature>
<feature type="compositionally biased region" description="Polar residues" evidence="1">
    <location>
        <begin position="59"/>
        <end position="70"/>
    </location>
</feature>
<feature type="compositionally biased region" description="Acidic residues" evidence="1">
    <location>
        <begin position="76"/>
        <end position="86"/>
    </location>
</feature>
<feature type="disulfide bond" evidence="3 7">
    <location>
        <begin position="6"/>
        <end position="22"/>
    </location>
</feature>
<feature type="disulfide bond" evidence="3 7">
    <location>
        <begin position="18"/>
        <end position="49"/>
    </location>
</feature>
<feature type="disulfide bond" evidence="3 7">
    <location>
        <begin position="39"/>
        <end position="54"/>
    </location>
</feature>
<comment type="function">
    <text evidence="2 3">Inhibits lectin and classical pathways of complement system activation in the host with no significant effect on the alternative pathway (PubMed:34118237). Inhibits host extrinsic blood coagulation pathway but not the intrinsic cascade (PubMed:12427468). Binds to neutral and negatively charged membranes in vitro; binding is reduced upon pre-incubation with Ca(2+) (PubMed:12427468).</text>
</comment>
<comment type="subcellular location">
    <subcellularLocation>
        <location evidence="6">Secreted</location>
    </subcellularLocation>
</comment>
<comment type="tissue specificity">
    <text evidence="2">Salivary gland (at protein level).</text>
</comment>
<comment type="caution">
    <text evidence="2 3">The protein was initially described as an inhibitor of host extrinsic blood coagulation pathway (PubMed:12427468). In another study, it was tested in chromogenic assays with TF-VIIa (F3-F7) and Xa (F10), but no inhibitory activity was observed (PubMed:34118237).</text>
</comment>
<proteinExistence type="evidence at protein level"/>
<dbReference type="PDB" id="7NE8">
    <property type="method" value="NMR"/>
</dbReference>
<dbReference type="PDBsum" id="7NE8"/>
<dbReference type="SMR" id="C0HMC3"/>
<dbReference type="GO" id="GO:0005576">
    <property type="term" value="C:extracellular region"/>
    <property type="evidence" value="ECO:0007669"/>
    <property type="project" value="UniProtKB-SubCell"/>
</dbReference>
<dbReference type="GO" id="GO:0090729">
    <property type="term" value="F:toxin activity"/>
    <property type="evidence" value="ECO:0007669"/>
    <property type="project" value="UniProtKB-KW"/>
</dbReference>
<dbReference type="InterPro" id="IPR011694">
    <property type="entry name" value="Ixonnexin-like"/>
</dbReference>
<dbReference type="Pfam" id="PF07771">
    <property type="entry name" value="TSGP1"/>
    <property type="match status" value="1"/>
</dbReference>
<name>BSAP1_ORNSA</name>
<protein>
    <recommendedName>
        <fullName evidence="4 5">BaSO(4)-adsorbing protein 1</fullName>
        <shortName evidence="4 5">BSAP1</shortName>
    </recommendedName>
</protein>
<reference evidence="6" key="1">
    <citation type="journal article" date="2002" name="Exp. Parasitol.">
        <title>Identification of extrinsic blood coagulation pathway inhibitors from the tick Ornithodoros savignyi (Acari: Argasidae).</title>
        <authorList>
            <person name="Ehebauer M.T."/>
            <person name="Mans B.J."/>
            <person name="Gaspar A.R."/>
            <person name="Neitz A.W."/>
        </authorList>
    </citation>
    <scope>FUNCTION</scope>
    <scope>TISSUE SPECIFICITY</scope>
</reference>
<reference evidence="7" key="2">
    <citation type="journal article" date="2021" name="J. Biol. Chem.">
        <title>Molecular basis of anticoagulant and anticomplement activity of the tick salivary protein Salp14 and its homologs.</title>
        <authorList>
            <person name="Denisov S.S."/>
            <person name="Ippel J.H."/>
            <person name="Castoldi E."/>
            <person name="Mans B.J."/>
            <person name="Hackeng T.M."/>
            <person name="Dijkgraaf I."/>
        </authorList>
    </citation>
    <scope>STRUCTURE BY NMR</scope>
    <scope>FUNCTION</scope>
    <scope>DISULFIDE BONDS</scope>
</reference>